<accession>Q74K02</accession>
<proteinExistence type="inferred from homology"/>
<protein>
    <recommendedName>
        <fullName evidence="1">Probable tRNA sulfurtransferase</fullName>
        <ecNumber evidence="1">2.8.1.4</ecNumber>
    </recommendedName>
    <alternativeName>
        <fullName evidence="1">Sulfur carrier protein ThiS sulfurtransferase</fullName>
    </alternativeName>
    <alternativeName>
        <fullName evidence="1">Thiamine biosynthesis protein ThiI</fullName>
    </alternativeName>
    <alternativeName>
        <fullName evidence="1">tRNA 4-thiouridine synthase</fullName>
    </alternativeName>
</protein>
<gene>
    <name evidence="1" type="primary">thiI</name>
    <name type="ordered locus">LJ_0954</name>
</gene>
<feature type="chain" id="PRO_1000074238" description="Probable tRNA sulfurtransferase">
    <location>
        <begin position="1"/>
        <end position="405"/>
    </location>
</feature>
<feature type="domain" description="THUMP" evidence="1">
    <location>
        <begin position="60"/>
        <end position="165"/>
    </location>
</feature>
<feature type="binding site" evidence="1">
    <location>
        <begin position="183"/>
        <end position="184"/>
    </location>
    <ligand>
        <name>ATP</name>
        <dbReference type="ChEBI" id="CHEBI:30616"/>
    </ligand>
</feature>
<feature type="binding site" evidence="1">
    <location>
        <begin position="208"/>
        <end position="209"/>
    </location>
    <ligand>
        <name>ATP</name>
        <dbReference type="ChEBI" id="CHEBI:30616"/>
    </ligand>
</feature>
<feature type="binding site" evidence="1">
    <location>
        <position position="265"/>
    </location>
    <ligand>
        <name>ATP</name>
        <dbReference type="ChEBI" id="CHEBI:30616"/>
    </ligand>
</feature>
<feature type="binding site" evidence="1">
    <location>
        <position position="287"/>
    </location>
    <ligand>
        <name>ATP</name>
        <dbReference type="ChEBI" id="CHEBI:30616"/>
    </ligand>
</feature>
<feature type="binding site" evidence="1">
    <location>
        <position position="296"/>
    </location>
    <ligand>
        <name>ATP</name>
        <dbReference type="ChEBI" id="CHEBI:30616"/>
    </ligand>
</feature>
<name>THII_LACJO</name>
<evidence type="ECO:0000255" key="1">
    <source>
        <dbReference type="HAMAP-Rule" id="MF_00021"/>
    </source>
</evidence>
<keyword id="KW-0067">ATP-binding</keyword>
<keyword id="KW-0963">Cytoplasm</keyword>
<keyword id="KW-0547">Nucleotide-binding</keyword>
<keyword id="KW-0694">RNA-binding</keyword>
<keyword id="KW-0784">Thiamine biosynthesis</keyword>
<keyword id="KW-0808">Transferase</keyword>
<keyword id="KW-0820">tRNA-binding</keyword>
<comment type="function">
    <text evidence="1">Catalyzes the ATP-dependent transfer of a sulfur to tRNA to produce 4-thiouridine in position 8 of tRNAs, which functions as a near-UV photosensor. Also catalyzes the transfer of sulfur to the sulfur carrier protein ThiS, forming ThiS-thiocarboxylate. This is a step in the synthesis of thiazole, in the thiamine biosynthesis pathway. The sulfur is donated as persulfide by IscS.</text>
</comment>
<comment type="catalytic activity">
    <reaction evidence="1">
        <text>[ThiI sulfur-carrier protein]-S-sulfanyl-L-cysteine + a uridine in tRNA + 2 reduced [2Fe-2S]-[ferredoxin] + ATP + H(+) = [ThiI sulfur-carrier protein]-L-cysteine + a 4-thiouridine in tRNA + 2 oxidized [2Fe-2S]-[ferredoxin] + AMP + diphosphate</text>
        <dbReference type="Rhea" id="RHEA:24176"/>
        <dbReference type="Rhea" id="RHEA-COMP:10000"/>
        <dbReference type="Rhea" id="RHEA-COMP:10001"/>
        <dbReference type="Rhea" id="RHEA-COMP:13337"/>
        <dbReference type="Rhea" id="RHEA-COMP:13338"/>
        <dbReference type="Rhea" id="RHEA-COMP:13339"/>
        <dbReference type="Rhea" id="RHEA-COMP:13340"/>
        <dbReference type="ChEBI" id="CHEBI:15378"/>
        <dbReference type="ChEBI" id="CHEBI:29950"/>
        <dbReference type="ChEBI" id="CHEBI:30616"/>
        <dbReference type="ChEBI" id="CHEBI:33019"/>
        <dbReference type="ChEBI" id="CHEBI:33737"/>
        <dbReference type="ChEBI" id="CHEBI:33738"/>
        <dbReference type="ChEBI" id="CHEBI:61963"/>
        <dbReference type="ChEBI" id="CHEBI:65315"/>
        <dbReference type="ChEBI" id="CHEBI:136798"/>
        <dbReference type="ChEBI" id="CHEBI:456215"/>
        <dbReference type="EC" id="2.8.1.4"/>
    </reaction>
</comment>
<comment type="catalytic activity">
    <reaction evidence="1">
        <text>[ThiS sulfur-carrier protein]-C-terminal Gly-Gly-AMP + S-sulfanyl-L-cysteinyl-[cysteine desulfurase] + AH2 = [ThiS sulfur-carrier protein]-C-terminal-Gly-aminoethanethioate + L-cysteinyl-[cysteine desulfurase] + A + AMP + 2 H(+)</text>
        <dbReference type="Rhea" id="RHEA:43340"/>
        <dbReference type="Rhea" id="RHEA-COMP:12157"/>
        <dbReference type="Rhea" id="RHEA-COMP:12158"/>
        <dbReference type="Rhea" id="RHEA-COMP:12910"/>
        <dbReference type="Rhea" id="RHEA-COMP:19908"/>
        <dbReference type="ChEBI" id="CHEBI:13193"/>
        <dbReference type="ChEBI" id="CHEBI:15378"/>
        <dbReference type="ChEBI" id="CHEBI:17499"/>
        <dbReference type="ChEBI" id="CHEBI:29950"/>
        <dbReference type="ChEBI" id="CHEBI:61963"/>
        <dbReference type="ChEBI" id="CHEBI:90618"/>
        <dbReference type="ChEBI" id="CHEBI:232372"/>
        <dbReference type="ChEBI" id="CHEBI:456215"/>
    </reaction>
</comment>
<comment type="pathway">
    <text evidence="1">Cofactor biosynthesis; thiamine diphosphate biosynthesis.</text>
</comment>
<comment type="subcellular location">
    <subcellularLocation>
        <location evidence="1">Cytoplasm</location>
    </subcellularLocation>
</comment>
<comment type="similarity">
    <text evidence="1">Belongs to the ThiI family.</text>
</comment>
<dbReference type="EC" id="2.8.1.4" evidence="1"/>
<dbReference type="EMBL" id="AE017198">
    <property type="protein sequence ID" value="AAS08775.1"/>
    <property type="molecule type" value="Genomic_DNA"/>
</dbReference>
<dbReference type="RefSeq" id="WP_011161830.1">
    <property type="nucleotide sequence ID" value="NC_005362.1"/>
</dbReference>
<dbReference type="SMR" id="Q74K02"/>
<dbReference type="KEGG" id="ljo:LJ_0954"/>
<dbReference type="PATRIC" id="fig|257314.6.peg.812"/>
<dbReference type="eggNOG" id="COG0301">
    <property type="taxonomic scope" value="Bacteria"/>
</dbReference>
<dbReference type="HOGENOM" id="CLU_037952_4_0_9"/>
<dbReference type="UniPathway" id="UPA00060"/>
<dbReference type="Proteomes" id="UP000000581">
    <property type="component" value="Chromosome"/>
</dbReference>
<dbReference type="GO" id="GO:0005829">
    <property type="term" value="C:cytosol"/>
    <property type="evidence" value="ECO:0007669"/>
    <property type="project" value="TreeGrafter"/>
</dbReference>
<dbReference type="GO" id="GO:0005524">
    <property type="term" value="F:ATP binding"/>
    <property type="evidence" value="ECO:0007669"/>
    <property type="project" value="UniProtKB-UniRule"/>
</dbReference>
<dbReference type="GO" id="GO:0004810">
    <property type="term" value="F:CCA tRNA nucleotidyltransferase activity"/>
    <property type="evidence" value="ECO:0007669"/>
    <property type="project" value="InterPro"/>
</dbReference>
<dbReference type="GO" id="GO:0000049">
    <property type="term" value="F:tRNA binding"/>
    <property type="evidence" value="ECO:0007669"/>
    <property type="project" value="UniProtKB-UniRule"/>
</dbReference>
<dbReference type="GO" id="GO:0140741">
    <property type="term" value="F:tRNA-uracil-4 sulfurtransferase activity"/>
    <property type="evidence" value="ECO:0007669"/>
    <property type="project" value="UniProtKB-EC"/>
</dbReference>
<dbReference type="GO" id="GO:0009228">
    <property type="term" value="P:thiamine biosynthetic process"/>
    <property type="evidence" value="ECO:0007669"/>
    <property type="project" value="UniProtKB-KW"/>
</dbReference>
<dbReference type="GO" id="GO:0009229">
    <property type="term" value="P:thiamine diphosphate biosynthetic process"/>
    <property type="evidence" value="ECO:0007669"/>
    <property type="project" value="UniProtKB-UniRule"/>
</dbReference>
<dbReference type="GO" id="GO:0052837">
    <property type="term" value="P:thiazole biosynthetic process"/>
    <property type="evidence" value="ECO:0007669"/>
    <property type="project" value="TreeGrafter"/>
</dbReference>
<dbReference type="GO" id="GO:0002937">
    <property type="term" value="P:tRNA 4-thiouridine biosynthesis"/>
    <property type="evidence" value="ECO:0007669"/>
    <property type="project" value="TreeGrafter"/>
</dbReference>
<dbReference type="CDD" id="cd01712">
    <property type="entry name" value="PPase_ThiI"/>
    <property type="match status" value="1"/>
</dbReference>
<dbReference type="CDD" id="cd11716">
    <property type="entry name" value="THUMP_ThiI"/>
    <property type="match status" value="1"/>
</dbReference>
<dbReference type="FunFam" id="3.40.50.620:FF:000053">
    <property type="entry name" value="Probable tRNA sulfurtransferase"/>
    <property type="match status" value="1"/>
</dbReference>
<dbReference type="Gene3D" id="3.30.2130.30">
    <property type="match status" value="1"/>
</dbReference>
<dbReference type="Gene3D" id="3.40.50.620">
    <property type="entry name" value="HUPs"/>
    <property type="match status" value="1"/>
</dbReference>
<dbReference type="HAMAP" id="MF_00021">
    <property type="entry name" value="ThiI"/>
    <property type="match status" value="1"/>
</dbReference>
<dbReference type="InterPro" id="IPR014729">
    <property type="entry name" value="Rossmann-like_a/b/a_fold"/>
</dbReference>
<dbReference type="InterPro" id="IPR020536">
    <property type="entry name" value="ThiI_AANH"/>
</dbReference>
<dbReference type="InterPro" id="IPR054173">
    <property type="entry name" value="ThiI_fer"/>
</dbReference>
<dbReference type="InterPro" id="IPR049961">
    <property type="entry name" value="ThiI_N"/>
</dbReference>
<dbReference type="InterPro" id="IPR004114">
    <property type="entry name" value="THUMP_dom"/>
</dbReference>
<dbReference type="InterPro" id="IPR049962">
    <property type="entry name" value="THUMP_ThiI"/>
</dbReference>
<dbReference type="InterPro" id="IPR003720">
    <property type="entry name" value="tRNA_STrfase"/>
</dbReference>
<dbReference type="InterPro" id="IPR050102">
    <property type="entry name" value="tRNA_sulfurtransferase_ThiI"/>
</dbReference>
<dbReference type="NCBIfam" id="TIGR00342">
    <property type="entry name" value="tRNA uracil 4-sulfurtransferase ThiI"/>
    <property type="match status" value="1"/>
</dbReference>
<dbReference type="PANTHER" id="PTHR43209">
    <property type="entry name" value="TRNA SULFURTRANSFERASE"/>
    <property type="match status" value="1"/>
</dbReference>
<dbReference type="PANTHER" id="PTHR43209:SF1">
    <property type="entry name" value="TRNA SULFURTRANSFERASE"/>
    <property type="match status" value="1"/>
</dbReference>
<dbReference type="Pfam" id="PF02568">
    <property type="entry name" value="ThiI"/>
    <property type="match status" value="1"/>
</dbReference>
<dbReference type="Pfam" id="PF22025">
    <property type="entry name" value="ThiI_fer"/>
    <property type="match status" value="1"/>
</dbReference>
<dbReference type="Pfam" id="PF02926">
    <property type="entry name" value="THUMP"/>
    <property type="match status" value="1"/>
</dbReference>
<dbReference type="SMART" id="SM00981">
    <property type="entry name" value="THUMP"/>
    <property type="match status" value="1"/>
</dbReference>
<dbReference type="SUPFAM" id="SSF52402">
    <property type="entry name" value="Adenine nucleotide alpha hydrolases-like"/>
    <property type="match status" value="1"/>
</dbReference>
<dbReference type="SUPFAM" id="SSF143437">
    <property type="entry name" value="THUMP domain-like"/>
    <property type="match status" value="1"/>
</dbReference>
<dbReference type="PROSITE" id="PS51165">
    <property type="entry name" value="THUMP"/>
    <property type="match status" value="1"/>
</dbReference>
<sequence length="405" mass="45595">MQYTEVMVRYGELSTKGKNRKDFIGRLAGNVTRALQDFPEIEIHPKHDRMHIVLNGAPFETIDQRLKLVFGIQTYSPTIKVDKNLDAIKKASLELMQATFKDGMTFKVNTRRSDHDFEYDTNQLNMMIGDYLFDNMDNLKVQMKKPDLVLRIEVRQDAIYISNQLLHGAGGMPVGTAGKAVMMLSGGIDSPVASYLAMKRGVEIDMVHFFSPPYTTEKALAKAKELTGILANYSGKINFIAVPFTEIQEQIKEKLPEGYLMTIQRRFMLQLADRIRAMRGGLAIFNGESVGQVASQTLESMVAINDVTSTPVLRPVATMDKTEIIKLAEQIGTFDLSIEPFEDCCTIFAPPRPKTKPKLDEARKLEDRLDAEGMIQRAIDGMEITPIYPNQKFLDDKAQEDADLL</sequence>
<organism>
    <name type="scientific">Lactobacillus johnsonii (strain CNCM I-12250 / La1 / NCC 533)</name>
    <dbReference type="NCBI Taxonomy" id="257314"/>
    <lineage>
        <taxon>Bacteria</taxon>
        <taxon>Bacillati</taxon>
        <taxon>Bacillota</taxon>
        <taxon>Bacilli</taxon>
        <taxon>Lactobacillales</taxon>
        <taxon>Lactobacillaceae</taxon>
        <taxon>Lactobacillus</taxon>
    </lineage>
</organism>
<reference key="1">
    <citation type="journal article" date="2004" name="Proc. Natl. Acad. Sci. U.S.A.">
        <title>The genome sequence of the probiotic intestinal bacterium Lactobacillus johnsonii NCC 533.</title>
        <authorList>
            <person name="Pridmore R.D."/>
            <person name="Berger B."/>
            <person name="Desiere F."/>
            <person name="Vilanova D."/>
            <person name="Barretto C."/>
            <person name="Pittet A.-C."/>
            <person name="Zwahlen M.-C."/>
            <person name="Rouvet M."/>
            <person name="Altermann E."/>
            <person name="Barrangou R."/>
            <person name="Mollet B."/>
            <person name="Mercenier A."/>
            <person name="Klaenhammer T."/>
            <person name="Arigoni F."/>
            <person name="Schell M.A."/>
        </authorList>
    </citation>
    <scope>NUCLEOTIDE SEQUENCE [LARGE SCALE GENOMIC DNA]</scope>
    <source>
        <strain>CNCM I-1225 / La1 / NCC 533</strain>
    </source>
</reference>